<protein>
    <recommendedName>
        <fullName evidence="1">Carboxy-S-adenosyl-L-methionine synthase</fullName>
        <shortName evidence="1">Cx-SAM synthase</shortName>
        <ecNumber evidence="1">2.1.3.-</ecNumber>
    </recommendedName>
</protein>
<feature type="chain" id="PRO_0000314327" description="Carboxy-S-adenosyl-L-methionine synthase">
    <location>
        <begin position="1"/>
        <end position="247"/>
    </location>
</feature>
<feature type="binding site" evidence="1">
    <location>
        <position position="39"/>
    </location>
    <ligand>
        <name>S-adenosyl-L-methionine</name>
        <dbReference type="ChEBI" id="CHEBI:59789"/>
    </ligand>
</feature>
<feature type="binding site" evidence="1">
    <location>
        <begin position="64"/>
        <end position="66"/>
    </location>
    <ligand>
        <name>S-adenosyl-L-methionine</name>
        <dbReference type="ChEBI" id="CHEBI:59789"/>
    </ligand>
</feature>
<feature type="binding site" evidence="1">
    <location>
        <begin position="89"/>
        <end position="90"/>
    </location>
    <ligand>
        <name>S-adenosyl-L-methionine</name>
        <dbReference type="ChEBI" id="CHEBI:59789"/>
    </ligand>
</feature>
<feature type="binding site" evidence="1">
    <location>
        <begin position="117"/>
        <end position="118"/>
    </location>
    <ligand>
        <name>S-adenosyl-L-methionine</name>
        <dbReference type="ChEBI" id="CHEBI:59789"/>
    </ligand>
</feature>
<feature type="binding site" evidence="1">
    <location>
        <position position="132"/>
    </location>
    <ligand>
        <name>S-adenosyl-L-methionine</name>
        <dbReference type="ChEBI" id="CHEBI:59789"/>
    </ligand>
</feature>
<feature type="binding site" evidence="1">
    <location>
        <position position="199"/>
    </location>
    <ligand>
        <name>S-adenosyl-L-methionine</name>
        <dbReference type="ChEBI" id="CHEBI:59789"/>
    </ligand>
</feature>
<dbReference type="EC" id="2.1.3.-" evidence="1"/>
<dbReference type="EMBL" id="AE005174">
    <property type="protein sequence ID" value="AAG56860.1"/>
    <property type="molecule type" value="Genomic_DNA"/>
</dbReference>
<dbReference type="EMBL" id="BA000007">
    <property type="protein sequence ID" value="BAB36003.1"/>
    <property type="molecule type" value="Genomic_DNA"/>
</dbReference>
<dbReference type="PIR" id="D90951">
    <property type="entry name" value="D90951"/>
</dbReference>
<dbReference type="PIR" id="H85799">
    <property type="entry name" value="H85799"/>
</dbReference>
<dbReference type="RefSeq" id="NP_310607.1">
    <property type="nucleotide sequence ID" value="NC_002695.1"/>
</dbReference>
<dbReference type="RefSeq" id="WP_000019588.1">
    <property type="nucleotide sequence ID" value="NZ_VOAI01000010.1"/>
</dbReference>
<dbReference type="SMR" id="Q8XCH6"/>
<dbReference type="STRING" id="155864.Z2923"/>
<dbReference type="GeneID" id="75202724"/>
<dbReference type="GeneID" id="912510"/>
<dbReference type="KEGG" id="ece:Z2923"/>
<dbReference type="KEGG" id="ecs:ECs_2580"/>
<dbReference type="PATRIC" id="fig|386585.9.peg.2704"/>
<dbReference type="eggNOG" id="COG2226">
    <property type="taxonomic scope" value="Bacteria"/>
</dbReference>
<dbReference type="HOGENOM" id="CLU_078475_0_0_6"/>
<dbReference type="OMA" id="QMIELYY"/>
<dbReference type="Proteomes" id="UP000000558">
    <property type="component" value="Chromosome"/>
</dbReference>
<dbReference type="Proteomes" id="UP000002519">
    <property type="component" value="Chromosome"/>
</dbReference>
<dbReference type="GO" id="GO:0016743">
    <property type="term" value="F:carboxyl- or carbamoyltransferase activity"/>
    <property type="evidence" value="ECO:0007669"/>
    <property type="project" value="UniProtKB-UniRule"/>
</dbReference>
<dbReference type="GO" id="GO:1904047">
    <property type="term" value="F:S-adenosyl-L-methionine binding"/>
    <property type="evidence" value="ECO:0007669"/>
    <property type="project" value="UniProtKB-UniRule"/>
</dbReference>
<dbReference type="GO" id="GO:0002098">
    <property type="term" value="P:tRNA wobble uridine modification"/>
    <property type="evidence" value="ECO:0007669"/>
    <property type="project" value="InterPro"/>
</dbReference>
<dbReference type="CDD" id="cd02440">
    <property type="entry name" value="AdoMet_MTases"/>
    <property type="match status" value="1"/>
</dbReference>
<dbReference type="FunFam" id="3.40.50.150:FF:000030">
    <property type="entry name" value="Carboxy-S-adenosyl-L-methionine synthase"/>
    <property type="match status" value="1"/>
</dbReference>
<dbReference type="Gene3D" id="3.40.50.150">
    <property type="entry name" value="Vaccinia Virus protein VP39"/>
    <property type="match status" value="1"/>
</dbReference>
<dbReference type="HAMAP" id="MF_01589">
    <property type="entry name" value="Cx_SAM_synthase"/>
    <property type="match status" value="1"/>
</dbReference>
<dbReference type="InterPro" id="IPR005271">
    <property type="entry name" value="CmoA"/>
</dbReference>
<dbReference type="InterPro" id="IPR041698">
    <property type="entry name" value="Methyltransf_25"/>
</dbReference>
<dbReference type="InterPro" id="IPR029063">
    <property type="entry name" value="SAM-dependent_MTases_sf"/>
</dbReference>
<dbReference type="NCBIfam" id="TIGR00740">
    <property type="entry name" value="carboxy-S-adenosyl-L-methionine synthase CmoA"/>
    <property type="match status" value="1"/>
</dbReference>
<dbReference type="NCBIfam" id="NF011995">
    <property type="entry name" value="PRK15451.1"/>
    <property type="match status" value="1"/>
</dbReference>
<dbReference type="PANTHER" id="PTHR43861:SF2">
    <property type="entry name" value="CARBOXY-S-ADENOSYL-L-METHIONINE SYNTHASE"/>
    <property type="match status" value="1"/>
</dbReference>
<dbReference type="PANTHER" id="PTHR43861">
    <property type="entry name" value="TRANS-ACONITATE 2-METHYLTRANSFERASE-RELATED"/>
    <property type="match status" value="1"/>
</dbReference>
<dbReference type="Pfam" id="PF13649">
    <property type="entry name" value="Methyltransf_25"/>
    <property type="match status" value="1"/>
</dbReference>
<dbReference type="PIRSF" id="PIRSF006325">
    <property type="entry name" value="MeTrfase_bac"/>
    <property type="match status" value="1"/>
</dbReference>
<dbReference type="SUPFAM" id="SSF53335">
    <property type="entry name" value="S-adenosyl-L-methionine-dependent methyltransferases"/>
    <property type="match status" value="1"/>
</dbReference>
<name>CMOA_ECO57</name>
<sequence length="247" mass="27791">MSHRDTLFSAPIARLGDWTFDERVAEVFPDMIQRSVPGYSNIISMIGMLAERFVQPGTQVYDLGCSLGAATLSVRRNIHHDNCKIIAIDNSPAMIERCRRHIDAYKAPTPVDVIEGDIRDIAIENASMVVLNFTLQFLEPSERQALLDKIYQGLNPGGALVLSEKFSFEDAKVGELLFNMHHDFKRANGYSELEISQKRSMLENVMLTDSVETHKARLHKAGFEHSELWFQCFNFGSLVALKAEDAA</sequence>
<evidence type="ECO:0000255" key="1">
    <source>
        <dbReference type="HAMAP-Rule" id="MF_01589"/>
    </source>
</evidence>
<proteinExistence type="inferred from homology"/>
<gene>
    <name evidence="1" type="primary">cmoA</name>
    <name type="ordered locus">Z2923</name>
    <name type="ordered locus">ECs2580</name>
</gene>
<comment type="function">
    <text evidence="1">Catalyzes the conversion of S-adenosyl-L-methionine (SAM) to carboxy-S-adenosyl-L-methionine (Cx-SAM).</text>
</comment>
<comment type="catalytic activity">
    <reaction evidence="1">
        <text>prephenate + S-adenosyl-L-methionine = carboxy-S-adenosyl-L-methionine + 3-phenylpyruvate + H2O</text>
        <dbReference type="Rhea" id="RHEA:51692"/>
        <dbReference type="ChEBI" id="CHEBI:15377"/>
        <dbReference type="ChEBI" id="CHEBI:18005"/>
        <dbReference type="ChEBI" id="CHEBI:29934"/>
        <dbReference type="ChEBI" id="CHEBI:59789"/>
        <dbReference type="ChEBI" id="CHEBI:134278"/>
    </reaction>
</comment>
<comment type="subunit">
    <text evidence="1">Homodimer.</text>
</comment>
<comment type="similarity">
    <text evidence="1">Belongs to the class I-like SAM-binding methyltransferase superfamily. Cx-SAM synthase family.</text>
</comment>
<keyword id="KW-1185">Reference proteome</keyword>
<keyword id="KW-0949">S-adenosyl-L-methionine</keyword>
<keyword id="KW-0808">Transferase</keyword>
<reference key="1">
    <citation type="journal article" date="2001" name="Nature">
        <title>Genome sequence of enterohaemorrhagic Escherichia coli O157:H7.</title>
        <authorList>
            <person name="Perna N.T."/>
            <person name="Plunkett G. III"/>
            <person name="Burland V."/>
            <person name="Mau B."/>
            <person name="Glasner J.D."/>
            <person name="Rose D.J."/>
            <person name="Mayhew G.F."/>
            <person name="Evans P.S."/>
            <person name="Gregor J."/>
            <person name="Kirkpatrick H.A."/>
            <person name="Posfai G."/>
            <person name="Hackett J."/>
            <person name="Klink S."/>
            <person name="Boutin A."/>
            <person name="Shao Y."/>
            <person name="Miller L."/>
            <person name="Grotbeck E.J."/>
            <person name="Davis N.W."/>
            <person name="Lim A."/>
            <person name="Dimalanta E.T."/>
            <person name="Potamousis K."/>
            <person name="Apodaca J."/>
            <person name="Anantharaman T.S."/>
            <person name="Lin J."/>
            <person name="Yen G."/>
            <person name="Schwartz D.C."/>
            <person name="Welch R.A."/>
            <person name="Blattner F.R."/>
        </authorList>
    </citation>
    <scope>NUCLEOTIDE SEQUENCE [LARGE SCALE GENOMIC DNA]</scope>
    <source>
        <strain>O157:H7 / EDL933 / ATCC 700927 / EHEC</strain>
    </source>
</reference>
<reference key="2">
    <citation type="journal article" date="2001" name="DNA Res.">
        <title>Complete genome sequence of enterohemorrhagic Escherichia coli O157:H7 and genomic comparison with a laboratory strain K-12.</title>
        <authorList>
            <person name="Hayashi T."/>
            <person name="Makino K."/>
            <person name="Ohnishi M."/>
            <person name="Kurokawa K."/>
            <person name="Ishii K."/>
            <person name="Yokoyama K."/>
            <person name="Han C.-G."/>
            <person name="Ohtsubo E."/>
            <person name="Nakayama K."/>
            <person name="Murata T."/>
            <person name="Tanaka M."/>
            <person name="Tobe T."/>
            <person name="Iida T."/>
            <person name="Takami H."/>
            <person name="Honda T."/>
            <person name="Sasakawa C."/>
            <person name="Ogasawara N."/>
            <person name="Yasunaga T."/>
            <person name="Kuhara S."/>
            <person name="Shiba T."/>
            <person name="Hattori M."/>
            <person name="Shinagawa H."/>
        </authorList>
    </citation>
    <scope>NUCLEOTIDE SEQUENCE [LARGE SCALE GENOMIC DNA]</scope>
    <source>
        <strain>O157:H7 / Sakai / RIMD 0509952 / EHEC</strain>
    </source>
</reference>
<accession>Q8XCH6</accession>
<accession>Q7AD62</accession>
<organism>
    <name type="scientific">Escherichia coli O157:H7</name>
    <dbReference type="NCBI Taxonomy" id="83334"/>
    <lineage>
        <taxon>Bacteria</taxon>
        <taxon>Pseudomonadati</taxon>
        <taxon>Pseudomonadota</taxon>
        <taxon>Gammaproteobacteria</taxon>
        <taxon>Enterobacterales</taxon>
        <taxon>Enterobacteriaceae</taxon>
        <taxon>Escherichia</taxon>
    </lineage>
</organism>